<accession>Q748D8</accession>
<reference key="1">
    <citation type="journal article" date="2003" name="Science">
        <title>Genome of Geobacter sulfurreducens: metal reduction in subsurface environments.</title>
        <authorList>
            <person name="Methe B.A."/>
            <person name="Nelson K.E."/>
            <person name="Eisen J.A."/>
            <person name="Paulsen I.T."/>
            <person name="Nelson W.C."/>
            <person name="Heidelberg J.F."/>
            <person name="Wu D."/>
            <person name="Wu M."/>
            <person name="Ward N.L."/>
            <person name="Beanan M.J."/>
            <person name="Dodson R.J."/>
            <person name="Madupu R."/>
            <person name="Brinkac L.M."/>
            <person name="Daugherty S.C."/>
            <person name="DeBoy R.T."/>
            <person name="Durkin A.S."/>
            <person name="Gwinn M.L."/>
            <person name="Kolonay J.F."/>
            <person name="Sullivan S.A."/>
            <person name="Haft D.H."/>
            <person name="Selengut J."/>
            <person name="Davidsen T.M."/>
            <person name="Zafar N."/>
            <person name="White O."/>
            <person name="Tran B."/>
            <person name="Romero C."/>
            <person name="Forberger H.A."/>
            <person name="Weidman J.F."/>
            <person name="Khouri H.M."/>
            <person name="Feldblyum T.V."/>
            <person name="Utterback T.R."/>
            <person name="Van Aken S.E."/>
            <person name="Lovley D.R."/>
            <person name="Fraser C.M."/>
        </authorList>
    </citation>
    <scope>NUCLEOTIDE SEQUENCE [LARGE SCALE GENOMIC DNA]</scope>
    <source>
        <strain>ATCC 51573 / DSM 12127 / PCA</strain>
    </source>
</reference>
<name>DDL_GEOSL</name>
<proteinExistence type="inferred from homology"/>
<gene>
    <name evidence="2" type="primary">ddl</name>
    <name type="ordered locus">GSU3066</name>
</gene>
<organism>
    <name type="scientific">Geobacter sulfurreducens (strain ATCC 51573 / DSM 12127 / PCA)</name>
    <dbReference type="NCBI Taxonomy" id="243231"/>
    <lineage>
        <taxon>Bacteria</taxon>
        <taxon>Pseudomonadati</taxon>
        <taxon>Thermodesulfobacteriota</taxon>
        <taxon>Desulfuromonadia</taxon>
        <taxon>Geobacterales</taxon>
        <taxon>Geobacteraceae</taxon>
        <taxon>Geobacter</taxon>
    </lineage>
</organism>
<evidence type="ECO:0000250" key="1"/>
<evidence type="ECO:0000255" key="2">
    <source>
        <dbReference type="HAMAP-Rule" id="MF_00047"/>
    </source>
</evidence>
<dbReference type="EC" id="6.3.2.4" evidence="2"/>
<dbReference type="EMBL" id="AE017180">
    <property type="protein sequence ID" value="AAR36458.1"/>
    <property type="molecule type" value="Genomic_DNA"/>
</dbReference>
<dbReference type="RefSeq" id="NP_954108.1">
    <property type="nucleotide sequence ID" value="NC_002939.5"/>
</dbReference>
<dbReference type="RefSeq" id="WP_010943691.1">
    <property type="nucleotide sequence ID" value="NC_002939.5"/>
</dbReference>
<dbReference type="SMR" id="Q748D8"/>
<dbReference type="FunCoup" id="Q748D8">
    <property type="interactions" value="298"/>
</dbReference>
<dbReference type="STRING" id="243231.GSU3066"/>
<dbReference type="EnsemblBacteria" id="AAR36458">
    <property type="protein sequence ID" value="AAR36458"/>
    <property type="gene ID" value="GSU3066"/>
</dbReference>
<dbReference type="KEGG" id="gsu:GSU3066"/>
<dbReference type="PATRIC" id="fig|243231.5.peg.3089"/>
<dbReference type="eggNOG" id="COG1181">
    <property type="taxonomic scope" value="Bacteria"/>
</dbReference>
<dbReference type="HOGENOM" id="CLU_039268_2_0_7"/>
<dbReference type="InParanoid" id="Q748D8"/>
<dbReference type="OrthoDB" id="9813261at2"/>
<dbReference type="UniPathway" id="UPA00219"/>
<dbReference type="Proteomes" id="UP000000577">
    <property type="component" value="Chromosome"/>
</dbReference>
<dbReference type="GO" id="GO:0005737">
    <property type="term" value="C:cytoplasm"/>
    <property type="evidence" value="ECO:0007669"/>
    <property type="project" value="UniProtKB-SubCell"/>
</dbReference>
<dbReference type="GO" id="GO:0005524">
    <property type="term" value="F:ATP binding"/>
    <property type="evidence" value="ECO:0007669"/>
    <property type="project" value="UniProtKB-KW"/>
</dbReference>
<dbReference type="GO" id="GO:0008716">
    <property type="term" value="F:D-alanine-D-alanine ligase activity"/>
    <property type="evidence" value="ECO:0000318"/>
    <property type="project" value="GO_Central"/>
</dbReference>
<dbReference type="GO" id="GO:0046872">
    <property type="term" value="F:metal ion binding"/>
    <property type="evidence" value="ECO:0007669"/>
    <property type="project" value="UniProtKB-KW"/>
</dbReference>
<dbReference type="GO" id="GO:0071555">
    <property type="term" value="P:cell wall organization"/>
    <property type="evidence" value="ECO:0007669"/>
    <property type="project" value="UniProtKB-KW"/>
</dbReference>
<dbReference type="GO" id="GO:0009252">
    <property type="term" value="P:peptidoglycan biosynthetic process"/>
    <property type="evidence" value="ECO:0007669"/>
    <property type="project" value="UniProtKB-UniRule"/>
</dbReference>
<dbReference type="GO" id="GO:0008360">
    <property type="term" value="P:regulation of cell shape"/>
    <property type="evidence" value="ECO:0007669"/>
    <property type="project" value="UniProtKB-KW"/>
</dbReference>
<dbReference type="FunFam" id="3.30.1490.20:FF:000007">
    <property type="entry name" value="D-alanine--D-alanine ligase"/>
    <property type="match status" value="1"/>
</dbReference>
<dbReference type="FunFam" id="3.40.50.20:FF:000013">
    <property type="entry name" value="D-alanine--D-alanine ligase"/>
    <property type="match status" value="1"/>
</dbReference>
<dbReference type="Gene3D" id="3.40.50.20">
    <property type="match status" value="1"/>
</dbReference>
<dbReference type="Gene3D" id="3.30.1490.20">
    <property type="entry name" value="ATP-grasp fold, A domain"/>
    <property type="match status" value="1"/>
</dbReference>
<dbReference type="Gene3D" id="3.30.470.20">
    <property type="entry name" value="ATP-grasp fold, B domain"/>
    <property type="match status" value="1"/>
</dbReference>
<dbReference type="HAMAP" id="MF_00047">
    <property type="entry name" value="Dala_Dala_lig"/>
    <property type="match status" value="1"/>
</dbReference>
<dbReference type="InterPro" id="IPR011761">
    <property type="entry name" value="ATP-grasp"/>
</dbReference>
<dbReference type="InterPro" id="IPR013815">
    <property type="entry name" value="ATP_grasp_subdomain_1"/>
</dbReference>
<dbReference type="InterPro" id="IPR000291">
    <property type="entry name" value="D-Ala_lig_Van_CS"/>
</dbReference>
<dbReference type="InterPro" id="IPR005905">
    <property type="entry name" value="D_ala_D_ala"/>
</dbReference>
<dbReference type="InterPro" id="IPR011095">
    <property type="entry name" value="Dala_Dala_lig_C"/>
</dbReference>
<dbReference type="InterPro" id="IPR011127">
    <property type="entry name" value="Dala_Dala_lig_N"/>
</dbReference>
<dbReference type="InterPro" id="IPR016185">
    <property type="entry name" value="PreATP-grasp_dom_sf"/>
</dbReference>
<dbReference type="NCBIfam" id="TIGR01205">
    <property type="entry name" value="D_ala_D_alaTIGR"/>
    <property type="match status" value="1"/>
</dbReference>
<dbReference type="NCBIfam" id="NF002378">
    <property type="entry name" value="PRK01372.1"/>
    <property type="match status" value="1"/>
</dbReference>
<dbReference type="NCBIfam" id="NF002528">
    <property type="entry name" value="PRK01966.1-4"/>
    <property type="match status" value="1"/>
</dbReference>
<dbReference type="PANTHER" id="PTHR23132">
    <property type="entry name" value="D-ALANINE--D-ALANINE LIGASE"/>
    <property type="match status" value="1"/>
</dbReference>
<dbReference type="PANTHER" id="PTHR23132:SF23">
    <property type="entry name" value="D-ALANINE--D-ALANINE LIGASE B"/>
    <property type="match status" value="1"/>
</dbReference>
<dbReference type="Pfam" id="PF07478">
    <property type="entry name" value="Dala_Dala_lig_C"/>
    <property type="match status" value="1"/>
</dbReference>
<dbReference type="Pfam" id="PF01820">
    <property type="entry name" value="Dala_Dala_lig_N"/>
    <property type="match status" value="2"/>
</dbReference>
<dbReference type="PIRSF" id="PIRSF039102">
    <property type="entry name" value="Ddl/VanB"/>
    <property type="match status" value="1"/>
</dbReference>
<dbReference type="SUPFAM" id="SSF56059">
    <property type="entry name" value="Glutathione synthetase ATP-binding domain-like"/>
    <property type="match status" value="1"/>
</dbReference>
<dbReference type="SUPFAM" id="SSF52440">
    <property type="entry name" value="PreATP-grasp domain"/>
    <property type="match status" value="1"/>
</dbReference>
<dbReference type="PROSITE" id="PS50975">
    <property type="entry name" value="ATP_GRASP"/>
    <property type="match status" value="1"/>
</dbReference>
<dbReference type="PROSITE" id="PS00843">
    <property type="entry name" value="DALA_DALA_LIGASE_1"/>
    <property type="match status" value="1"/>
</dbReference>
<dbReference type="PROSITE" id="PS00844">
    <property type="entry name" value="DALA_DALA_LIGASE_2"/>
    <property type="match status" value="1"/>
</dbReference>
<protein>
    <recommendedName>
        <fullName evidence="2">D-alanine--D-alanine ligase</fullName>
        <ecNumber evidence="2">6.3.2.4</ecNumber>
    </recommendedName>
    <alternativeName>
        <fullName evidence="2">D-Ala-D-Ala ligase</fullName>
    </alternativeName>
    <alternativeName>
        <fullName evidence="2">D-alanylalanine synthetase</fullName>
    </alternativeName>
</protein>
<comment type="function">
    <text evidence="2">Cell wall formation.</text>
</comment>
<comment type="catalytic activity">
    <reaction evidence="2">
        <text>2 D-alanine + ATP = D-alanyl-D-alanine + ADP + phosphate + H(+)</text>
        <dbReference type="Rhea" id="RHEA:11224"/>
        <dbReference type="ChEBI" id="CHEBI:15378"/>
        <dbReference type="ChEBI" id="CHEBI:30616"/>
        <dbReference type="ChEBI" id="CHEBI:43474"/>
        <dbReference type="ChEBI" id="CHEBI:57416"/>
        <dbReference type="ChEBI" id="CHEBI:57822"/>
        <dbReference type="ChEBI" id="CHEBI:456216"/>
        <dbReference type="EC" id="6.3.2.4"/>
    </reaction>
</comment>
<comment type="cofactor">
    <cofactor evidence="1">
        <name>Mg(2+)</name>
        <dbReference type="ChEBI" id="CHEBI:18420"/>
    </cofactor>
    <cofactor evidence="1">
        <name>Mn(2+)</name>
        <dbReference type="ChEBI" id="CHEBI:29035"/>
    </cofactor>
    <text evidence="1">Binds 2 magnesium or manganese ions per subunit.</text>
</comment>
<comment type="pathway">
    <text evidence="2">Cell wall biogenesis; peptidoglycan biosynthesis.</text>
</comment>
<comment type="subcellular location">
    <subcellularLocation>
        <location evidence="2">Cytoplasm</location>
    </subcellularLocation>
</comment>
<comment type="similarity">
    <text evidence="2">Belongs to the D-alanine--D-alanine ligase family.</text>
</comment>
<feature type="chain" id="PRO_0000341102" description="D-alanine--D-alanine ligase">
    <location>
        <begin position="1"/>
        <end position="316"/>
    </location>
</feature>
<feature type="domain" description="ATP-grasp" evidence="2">
    <location>
        <begin position="107"/>
        <end position="303"/>
    </location>
</feature>
<feature type="binding site" evidence="2">
    <location>
        <begin position="133"/>
        <end position="188"/>
    </location>
    <ligand>
        <name>ATP</name>
        <dbReference type="ChEBI" id="CHEBI:30616"/>
    </ligand>
</feature>
<feature type="binding site" evidence="2">
    <location>
        <position position="256"/>
    </location>
    <ligand>
        <name>Mg(2+)</name>
        <dbReference type="ChEBI" id="CHEBI:18420"/>
        <label>1</label>
    </ligand>
</feature>
<feature type="binding site" evidence="2">
    <location>
        <position position="269"/>
    </location>
    <ligand>
        <name>Mg(2+)</name>
        <dbReference type="ChEBI" id="CHEBI:18420"/>
        <label>1</label>
    </ligand>
</feature>
<feature type="binding site" evidence="2">
    <location>
        <position position="269"/>
    </location>
    <ligand>
        <name>Mg(2+)</name>
        <dbReference type="ChEBI" id="CHEBI:18420"/>
        <label>2</label>
    </ligand>
</feature>
<feature type="binding site" evidence="2">
    <location>
        <position position="271"/>
    </location>
    <ligand>
        <name>Mg(2+)</name>
        <dbReference type="ChEBI" id="CHEBI:18420"/>
        <label>2</label>
    </ligand>
</feature>
<sequence>MTRDELKTTKIGVLMGGLSAEREVSLASGGAVLKALQSRGYDAVPVDVGRDLPQVLVREWIDVAFICLHGRYGEDGTVQGLLELMGIPYTGSGVLASALAMNKIVAKEVFAARGLTIAPYRVVRRGETVDPVAEGFGYPVVVKPSQEGSSVGVSIVKSPEELPSALELAFRYDDDILVERFIKGREIQIGILDDRAMGAIEIVPVNEFYDFEAKYTAGKAEHICPPVLPAELHRRLLAEGEAAHRALGCSGYSRVDFLVTEGGECYLLEVNTLPGMTALSLLPEIALKESGIGFEDLVERILISAELKIKGEGAGS</sequence>
<keyword id="KW-0067">ATP-binding</keyword>
<keyword id="KW-0133">Cell shape</keyword>
<keyword id="KW-0961">Cell wall biogenesis/degradation</keyword>
<keyword id="KW-0963">Cytoplasm</keyword>
<keyword id="KW-0436">Ligase</keyword>
<keyword id="KW-0460">Magnesium</keyword>
<keyword id="KW-0464">Manganese</keyword>
<keyword id="KW-0479">Metal-binding</keyword>
<keyword id="KW-0547">Nucleotide-binding</keyword>
<keyword id="KW-0573">Peptidoglycan synthesis</keyword>
<keyword id="KW-1185">Reference proteome</keyword>